<evidence type="ECO:0000255" key="1">
    <source>
        <dbReference type="PROSITE-ProRule" id="PRU00434"/>
    </source>
</evidence>
<evidence type="ECO:0000305" key="2"/>
<keyword id="KW-0067">ATP-binding</keyword>
<keyword id="KW-0150">Chloroplast</keyword>
<keyword id="KW-0547">Nucleotide-binding</keyword>
<keyword id="KW-0934">Plastid</keyword>
<keyword id="KW-0813">Transport</keyword>
<accession>Q00830</accession>
<feature type="chain" id="PRO_0000093411" description="Probable ATP-dependent transporter ycf16">
    <location>
        <begin position="1"/>
        <end position="251"/>
    </location>
</feature>
<feature type="domain" description="ABC transporter" evidence="1">
    <location>
        <begin position="8"/>
        <end position="250"/>
    </location>
</feature>
<feature type="binding site" evidence="1">
    <location>
        <begin position="40"/>
        <end position="47"/>
    </location>
    <ligand>
        <name>ATP</name>
        <dbReference type="ChEBI" id="CHEBI:30616"/>
    </ligand>
</feature>
<gene>
    <name type="primary">ycf16</name>
</gene>
<sequence>MNTNYPILEIKNLKACINENEILKDLNLKIHKGEIHAIMGPNGSGKSTFSKVLAGHPAYNILSGDILFKGSSILNLDPEERSHMGIFLAFQYPIEIPGVSNEDFLRLAYNSKQKFLNKDEVDPISFFTIINEKLKLVDMSPVFLSRNVNEGFSGGEKKRNEILQMILLDSELSILDETDSGLDIDALKIISKGINTFMNQNKAIILITHYQRLLDYVQPNYVHVMQNGKIIKTGTADLAKELESKGYEWLK</sequence>
<protein>
    <recommendedName>
        <fullName>Probable ATP-dependent transporter ycf16</fullName>
    </recommendedName>
</protein>
<proteinExistence type="inferred from homology"/>
<geneLocation type="chloroplast"/>
<comment type="subcellular location">
    <subcellularLocation>
        <location>Plastid</location>
        <location>Chloroplast</location>
    </subcellularLocation>
</comment>
<comment type="similarity">
    <text evidence="2">Belongs to the ABC transporter superfamily. Ycf16 family.</text>
</comment>
<organism>
    <name type="scientific">Trieres chinensis</name>
    <name type="common">Marine centric diatom</name>
    <name type="synonym">Odontella sinensis</name>
    <dbReference type="NCBI Taxonomy" id="1514140"/>
    <lineage>
        <taxon>Eukaryota</taxon>
        <taxon>Sar</taxon>
        <taxon>Stramenopiles</taxon>
        <taxon>Ochrophyta</taxon>
        <taxon>Bacillariophyta</taxon>
        <taxon>Mediophyceae</taxon>
        <taxon>Biddulphiophycidae</taxon>
        <taxon>Eupodiscales</taxon>
        <taxon>Parodontellaceae</taxon>
        <taxon>Trieres</taxon>
    </lineage>
</organism>
<dbReference type="EMBL" id="X60752">
    <property type="protein sequence ID" value="CAA43151.1"/>
    <property type="molecule type" value="Genomic_DNA"/>
</dbReference>
<dbReference type="EMBL" id="Z67753">
    <property type="protein sequence ID" value="CAA91688.1"/>
    <property type="molecule type" value="Genomic_DNA"/>
</dbReference>
<dbReference type="PIR" id="S21682">
    <property type="entry name" value="S21682"/>
</dbReference>
<dbReference type="RefSeq" id="NP_043656.1">
    <property type="nucleotide sequence ID" value="NC_001713.1"/>
</dbReference>
<dbReference type="SMR" id="Q00830"/>
<dbReference type="GeneID" id="801763"/>
<dbReference type="GO" id="GO:0009507">
    <property type="term" value="C:chloroplast"/>
    <property type="evidence" value="ECO:0007669"/>
    <property type="project" value="UniProtKB-SubCell"/>
</dbReference>
<dbReference type="GO" id="GO:0005524">
    <property type="term" value="F:ATP binding"/>
    <property type="evidence" value="ECO:0007669"/>
    <property type="project" value="UniProtKB-KW"/>
</dbReference>
<dbReference type="GO" id="GO:0016887">
    <property type="term" value="F:ATP hydrolysis activity"/>
    <property type="evidence" value="ECO:0007669"/>
    <property type="project" value="InterPro"/>
</dbReference>
<dbReference type="CDD" id="cd03217">
    <property type="entry name" value="ABC_FeS_Assembly"/>
    <property type="match status" value="1"/>
</dbReference>
<dbReference type="Gene3D" id="3.40.50.300">
    <property type="entry name" value="P-loop containing nucleotide triphosphate hydrolases"/>
    <property type="match status" value="1"/>
</dbReference>
<dbReference type="InterPro" id="IPR003439">
    <property type="entry name" value="ABC_transporter-like_ATP-bd"/>
</dbReference>
<dbReference type="InterPro" id="IPR017871">
    <property type="entry name" value="ABC_transporter-like_CS"/>
</dbReference>
<dbReference type="InterPro" id="IPR010230">
    <property type="entry name" value="FeS-cluster_ATPase_SufC"/>
</dbReference>
<dbReference type="InterPro" id="IPR027417">
    <property type="entry name" value="P-loop_NTPase"/>
</dbReference>
<dbReference type="NCBIfam" id="TIGR01978">
    <property type="entry name" value="sufC"/>
    <property type="match status" value="1"/>
</dbReference>
<dbReference type="PANTHER" id="PTHR43204">
    <property type="entry name" value="ABC TRANSPORTER I FAMILY MEMBER 6, CHLOROPLASTIC"/>
    <property type="match status" value="1"/>
</dbReference>
<dbReference type="PANTHER" id="PTHR43204:SF1">
    <property type="entry name" value="ABC TRANSPORTER I FAMILY MEMBER 6, CHLOROPLASTIC"/>
    <property type="match status" value="1"/>
</dbReference>
<dbReference type="Pfam" id="PF00005">
    <property type="entry name" value="ABC_tran"/>
    <property type="match status" value="1"/>
</dbReference>
<dbReference type="SUPFAM" id="SSF52540">
    <property type="entry name" value="P-loop containing nucleoside triphosphate hydrolases"/>
    <property type="match status" value="1"/>
</dbReference>
<dbReference type="PROSITE" id="PS00211">
    <property type="entry name" value="ABC_TRANSPORTER_1"/>
    <property type="match status" value="1"/>
</dbReference>
<dbReference type="PROSITE" id="PS50893">
    <property type="entry name" value="ABC_TRANSPORTER_2"/>
    <property type="match status" value="1"/>
</dbReference>
<name>ABCX_TRICV</name>
<reference key="1">
    <citation type="journal article" date="1992" name="J. Mol. Biol.">
        <title>Chloroplast ATPase genes in the diatom Odontella sinensis reflect cyanobacterial characters in structure and arrangement.</title>
        <authorList>
            <person name="Pancic P.G."/>
            <person name="Strotmann H."/>
            <person name="Kowallik K.V."/>
        </authorList>
    </citation>
    <scope>NUCLEOTIDE SEQUENCE [GENOMIC DNA]</scope>
</reference>
<reference key="2">
    <citation type="journal article" date="1995" name="Plant Mol. Biol. Rep.">
        <title>The chloroplast genome of a chlorophyll a+c-containing alga, Odontella sinensis.</title>
        <authorList>
            <person name="Kowallik K.V."/>
            <person name="Stoebe B."/>
            <person name="Schaffran I."/>
            <person name="Kroth-Pancic P."/>
            <person name="Freier U."/>
        </authorList>
    </citation>
    <scope>NUCLEOTIDE SEQUENCE [LARGE SCALE GENOMIC DNA]</scope>
</reference>